<feature type="chain" id="PRO_0000429915" description="D-galactonate dehydratase family member OG2516_05608">
    <location>
        <begin position="1"/>
        <end position="408"/>
    </location>
</feature>
<feature type="binding site" evidence="1">
    <location>
        <position position="215"/>
    </location>
    <ligand>
        <name>Mg(2+)</name>
        <dbReference type="ChEBI" id="CHEBI:18420"/>
    </ligand>
</feature>
<feature type="binding site" evidence="1">
    <location>
        <position position="217"/>
    </location>
    <ligand>
        <name>D-arabinonate</name>
        <dbReference type="ChEBI" id="CHEBI:16157"/>
    </ligand>
</feature>
<feature type="binding site" evidence="1">
    <location>
        <position position="241"/>
    </location>
    <ligand>
        <name>Mg(2+)</name>
        <dbReference type="ChEBI" id="CHEBI:18420"/>
    </ligand>
</feature>
<feature type="binding site" evidence="1">
    <location>
        <position position="267"/>
    </location>
    <ligand>
        <name>D-arabinonate</name>
        <dbReference type="ChEBI" id="CHEBI:16157"/>
    </ligand>
</feature>
<feature type="binding site" evidence="1">
    <location>
        <position position="267"/>
    </location>
    <ligand>
        <name>Mg(2+)</name>
        <dbReference type="ChEBI" id="CHEBI:18420"/>
    </ligand>
</feature>
<feature type="binding site" evidence="1">
    <location>
        <position position="288"/>
    </location>
    <ligand>
        <name>D-arabinonate</name>
        <dbReference type="ChEBI" id="CHEBI:16157"/>
    </ligand>
</feature>
<feature type="binding site" evidence="1">
    <location>
        <position position="317"/>
    </location>
    <ligand>
        <name>D-arabinonate</name>
        <dbReference type="ChEBI" id="CHEBI:16157"/>
    </ligand>
</feature>
<feature type="binding site" evidence="1">
    <location>
        <position position="344"/>
    </location>
    <ligand>
        <name>D-arabinonate</name>
        <dbReference type="ChEBI" id="CHEBI:16157"/>
    </ligand>
</feature>
<proteinExistence type="inferred from homology"/>
<comment type="function">
    <text evidence="2">Has no detectable activity with D-mannonate and with a panel of 70 other acid sugars (in vitro), in spite of the conservation of the residues that are expected to be important for catalytic activity and cofactor binding. May have evolved a divergent function.</text>
</comment>
<comment type="similarity">
    <text evidence="3">Belongs to the mandelate racemase/muconate lactonizing enzyme family. GalD subfamily.</text>
</comment>
<name>IMAND_OCEGH</name>
<sequence length="408" mass="45331">MKITDAKVFVGGPGKNYVTVKVMTDSGVYGLGDATLNNRETLPAKYLTDYLVPNLIGMDPRRSEDIWQFLYRGAYFRRGPVAMAAFGAIDMALWDIKGKLADMPLYQLFGGKSRDGAMVYGHATGADLEDLMDSIAHYVEQGYKAVRVQCGIPGMPTASYAVPEERGASKHYISDFSGIRPKTEIWDSGKYLRWMPGALMAIRERFGPDLHILHDVHHRLTPREAAQFAKAVEPVDLYWLEDPTPAEDQAALRLVRQHSTTPIAIGEVFNSIWECNKLIEEELIDFIRVAATYAGGITHVKRIVDLAGLHHVRTGFHGAPSHSPLCMAAHAHLNAWAPNFGIQEYLVLGTPDCDALFPSDHRMEDGMVHVSDAPGLGVDFDEAEAARYEYRPGSHPVVRLTDGTMWDY</sequence>
<dbReference type="EMBL" id="AAOT01000003">
    <property type="protein sequence ID" value="EAR52559.1"/>
    <property type="molecule type" value="Genomic_DNA"/>
</dbReference>
<dbReference type="RefSeq" id="WP_007254649.1">
    <property type="nucleotide sequence ID" value="NZ_CH724107.1"/>
</dbReference>
<dbReference type="SMR" id="Q2CIN0"/>
<dbReference type="STRING" id="314256.OG2516_05608"/>
<dbReference type="eggNOG" id="COG4948">
    <property type="taxonomic scope" value="Bacteria"/>
</dbReference>
<dbReference type="HOGENOM" id="CLU_030273_6_1_5"/>
<dbReference type="OrthoDB" id="9802699at2"/>
<dbReference type="Proteomes" id="UP000003635">
    <property type="component" value="Unassembled WGS sequence"/>
</dbReference>
<dbReference type="GO" id="GO:0000287">
    <property type="term" value="F:magnesium ion binding"/>
    <property type="evidence" value="ECO:0000250"/>
    <property type="project" value="UniProtKB"/>
</dbReference>
<dbReference type="GO" id="GO:0008927">
    <property type="term" value="F:mannonate dehydratase activity"/>
    <property type="evidence" value="ECO:0007669"/>
    <property type="project" value="UniProtKB-ARBA"/>
</dbReference>
<dbReference type="GO" id="GO:0009063">
    <property type="term" value="P:amino acid catabolic process"/>
    <property type="evidence" value="ECO:0007669"/>
    <property type="project" value="InterPro"/>
</dbReference>
<dbReference type="GO" id="GO:0016052">
    <property type="term" value="P:carbohydrate catabolic process"/>
    <property type="evidence" value="ECO:0007669"/>
    <property type="project" value="UniProtKB-ARBA"/>
</dbReference>
<dbReference type="FunFam" id="3.20.20.120:FF:000011">
    <property type="entry name" value="D-galactonate dehydratase family member VSWAT3_13707"/>
    <property type="match status" value="1"/>
</dbReference>
<dbReference type="Gene3D" id="3.20.20.120">
    <property type="entry name" value="Enolase-like C-terminal domain"/>
    <property type="match status" value="1"/>
</dbReference>
<dbReference type="Gene3D" id="3.30.390.10">
    <property type="entry name" value="Enolase-like, N-terminal domain"/>
    <property type="match status" value="1"/>
</dbReference>
<dbReference type="InterPro" id="IPR034589">
    <property type="entry name" value="D-mannonate_dehydratase-like"/>
</dbReference>
<dbReference type="InterPro" id="IPR053379">
    <property type="entry name" value="D-mannonate_dehydratase_GalD"/>
</dbReference>
<dbReference type="InterPro" id="IPR034593">
    <property type="entry name" value="DgoD-like"/>
</dbReference>
<dbReference type="InterPro" id="IPR036849">
    <property type="entry name" value="Enolase-like_C_sf"/>
</dbReference>
<dbReference type="InterPro" id="IPR029017">
    <property type="entry name" value="Enolase-like_N"/>
</dbReference>
<dbReference type="InterPro" id="IPR029065">
    <property type="entry name" value="Enolase_C-like"/>
</dbReference>
<dbReference type="InterPro" id="IPR018110">
    <property type="entry name" value="Mandel_Rmase/mucon_lact_enz_CS"/>
</dbReference>
<dbReference type="InterPro" id="IPR013342">
    <property type="entry name" value="Mandelate_racemase_C"/>
</dbReference>
<dbReference type="InterPro" id="IPR013341">
    <property type="entry name" value="Mandelate_racemase_N_dom"/>
</dbReference>
<dbReference type="NCBIfam" id="NF043051">
    <property type="entry name" value="ManoateDhtManD"/>
    <property type="match status" value="1"/>
</dbReference>
<dbReference type="NCBIfam" id="NF011654">
    <property type="entry name" value="PRK15072.1"/>
    <property type="match status" value="1"/>
</dbReference>
<dbReference type="PANTHER" id="PTHR48080">
    <property type="entry name" value="D-GALACTONATE DEHYDRATASE-RELATED"/>
    <property type="match status" value="1"/>
</dbReference>
<dbReference type="PANTHER" id="PTHR48080:SF6">
    <property type="entry name" value="STARVATION-SENSING PROTEIN RSPA"/>
    <property type="match status" value="1"/>
</dbReference>
<dbReference type="Pfam" id="PF13378">
    <property type="entry name" value="MR_MLE_C"/>
    <property type="match status" value="1"/>
</dbReference>
<dbReference type="Pfam" id="PF02746">
    <property type="entry name" value="MR_MLE_N"/>
    <property type="match status" value="1"/>
</dbReference>
<dbReference type="SFLD" id="SFLDS00001">
    <property type="entry name" value="Enolase"/>
    <property type="match status" value="1"/>
</dbReference>
<dbReference type="SFLD" id="SFLDG00033">
    <property type="entry name" value="mannonate_dehydratase"/>
    <property type="match status" value="1"/>
</dbReference>
<dbReference type="SMART" id="SM00922">
    <property type="entry name" value="MR_MLE"/>
    <property type="match status" value="1"/>
</dbReference>
<dbReference type="SUPFAM" id="SSF51604">
    <property type="entry name" value="Enolase C-terminal domain-like"/>
    <property type="match status" value="1"/>
</dbReference>
<dbReference type="SUPFAM" id="SSF54826">
    <property type="entry name" value="Enolase N-terminal domain-like"/>
    <property type="match status" value="1"/>
</dbReference>
<dbReference type="PROSITE" id="PS00908">
    <property type="entry name" value="MR_MLE_1"/>
    <property type="match status" value="1"/>
</dbReference>
<dbReference type="PROSITE" id="PS00909">
    <property type="entry name" value="MR_MLE_2"/>
    <property type="match status" value="1"/>
</dbReference>
<protein>
    <recommendedName>
        <fullName>D-galactonate dehydratase family member OG2516_05608</fullName>
    </recommendedName>
</protein>
<evidence type="ECO:0000250" key="1"/>
<evidence type="ECO:0000269" key="2">
    <source>
    </source>
</evidence>
<evidence type="ECO:0000305" key="3"/>
<accession>Q2CIN0</accession>
<keyword id="KW-0460">Magnesium</keyword>
<keyword id="KW-0479">Metal-binding</keyword>
<keyword id="KW-1185">Reference proteome</keyword>
<gene>
    <name type="ORF">OG2516_05608</name>
</gene>
<reference key="1">
    <citation type="journal article" date="2010" name="J. Bacteriol.">
        <title>Genome sequences of Oceanicola granulosus HTCC2516(T) and Oceanicola batsensis HTCC2597(TDelta).</title>
        <authorList>
            <person name="Thrash J.C."/>
            <person name="Cho J.C."/>
            <person name="Vergin K.L."/>
            <person name="Giovannoni S.J."/>
        </authorList>
    </citation>
    <scope>NUCLEOTIDE SEQUENCE [LARGE SCALE GENOMIC DNA]</scope>
    <source>
        <strain>ATCC BAA-861 / DSM 15982 / KCTC 12143 / HTCC2516</strain>
    </source>
</reference>
<reference key="2">
    <citation type="journal article" date="2014" name="Biochemistry">
        <title>Discovery of function in the enolase superfamily: D-mannonate and D-gluconate dehydratases in the D-mannonate dehydratase subgroup.</title>
        <authorList>
            <person name="Wichelecki D.J."/>
            <person name="Balthazor B.M."/>
            <person name="Chau A.C."/>
            <person name="Vetting M.W."/>
            <person name="Fedorov A.A."/>
            <person name="Fedorov E.V."/>
            <person name="Lukk T."/>
            <person name="Patskovsky Y.V."/>
            <person name="Stead M.B."/>
            <person name="Hillerich B.S."/>
            <person name="Seidel R.D."/>
            <person name="Almo S.C."/>
            <person name="Gerlt J.A."/>
        </authorList>
    </citation>
    <scope>FUNCTION</scope>
    <scope>LACK OF D-MANNONATE DEHYDRATASE ACTIVITY</scope>
    <source>
        <strain>ATCC BAA-861 / DSM 15982 / KCTC 12143 / HTCC2516</strain>
    </source>
</reference>
<organism>
    <name type="scientific">Oceanicola granulosus (strain ATCC BAA-861 / DSM 15982 / KCTC 12143 / HTCC2516)</name>
    <dbReference type="NCBI Taxonomy" id="314256"/>
    <lineage>
        <taxon>Bacteria</taxon>
        <taxon>Pseudomonadati</taxon>
        <taxon>Pseudomonadota</taxon>
        <taxon>Alphaproteobacteria</taxon>
        <taxon>Rhodobacterales</taxon>
        <taxon>Roseobacteraceae</taxon>
        <taxon>Oceanicola</taxon>
    </lineage>
</organism>